<reference key="1">
    <citation type="journal article" date="2007" name="PLoS ONE">
        <title>Complete genomic characterization of a pathogenic A.II strain of Francisella tularensis subspecies tularensis.</title>
        <authorList>
            <person name="Beckstrom-Sternberg S.M."/>
            <person name="Auerbach R.K."/>
            <person name="Godbole S."/>
            <person name="Pearson J.V."/>
            <person name="Beckstrom-Sternberg J.S."/>
            <person name="Deng Z."/>
            <person name="Munk C."/>
            <person name="Kubota K."/>
            <person name="Zhou Y."/>
            <person name="Bruce D."/>
            <person name="Noronha J."/>
            <person name="Scheuermann R.H."/>
            <person name="Wang A."/>
            <person name="Wei X."/>
            <person name="Wang J."/>
            <person name="Hao J."/>
            <person name="Wagner D.M."/>
            <person name="Brettin T.S."/>
            <person name="Brown N."/>
            <person name="Gilna P."/>
            <person name="Keim P.S."/>
        </authorList>
    </citation>
    <scope>NUCLEOTIDE SEQUENCE [LARGE SCALE GENOMIC DNA]</scope>
    <source>
        <strain>WY96-3418</strain>
    </source>
</reference>
<feature type="signal peptide" evidence="1">
    <location>
        <begin position="1"/>
        <end position="20"/>
    </location>
</feature>
<feature type="chain" id="PRO_1000026702" description="Tol-Pal system protein TolB" evidence="1">
    <location>
        <begin position="21"/>
        <end position="435"/>
    </location>
</feature>
<protein>
    <recommendedName>
        <fullName evidence="1">Tol-Pal system protein TolB</fullName>
    </recommendedName>
</protein>
<keyword id="KW-0131">Cell cycle</keyword>
<keyword id="KW-0132">Cell division</keyword>
<keyword id="KW-0574">Periplasm</keyword>
<keyword id="KW-0732">Signal</keyword>
<accession>A4IYV5</accession>
<organism>
    <name type="scientific">Francisella tularensis subsp. tularensis (strain WY96-3418)</name>
    <dbReference type="NCBI Taxonomy" id="418136"/>
    <lineage>
        <taxon>Bacteria</taxon>
        <taxon>Pseudomonadati</taxon>
        <taxon>Pseudomonadota</taxon>
        <taxon>Gammaproteobacteria</taxon>
        <taxon>Thiotrichales</taxon>
        <taxon>Francisellaceae</taxon>
        <taxon>Francisella</taxon>
    </lineage>
</organism>
<sequence length="435" mass="48329">MRKIIAGVFIFVFLISNLYAALVAEVTTGVIQKPLVTVVSDNVVDQFPQQVNSVIVADLNHNAKLQANDTIKYEIKQKQNIPWKSLKSDYVVLTKYTNNSYNNYTVEVQILKRNDTSYLQAITYKNINVSLMRTLAHKISNYVYQKLTGNQGFFLTKLAYVKVSNPYARYGRLYELIISDYDGYNKHVVLRQTDNPIATPSWSNDGRYIVYSSYSGGSMGVYTLEIATGKVTRITNYKGINSSPSLSPDGKEIALALSKGYSDQTNIYIMNLSTKALKRITINGINTAPKFSPNGQSIVFTSDREGRPNIYVASVNSKYPQSSILSTKIHQAYEPNYTPDGKNIVFMNQSSRTSGTQIADFNLANGSVTNITNGKADSSPTVSPYGDMVAYISTNTRGYSSLDMVSLDGDNHFNIETADNGNILIQSPSWSPKNF</sequence>
<dbReference type="EMBL" id="CP000608">
    <property type="protein sequence ID" value="ABO47106.1"/>
    <property type="molecule type" value="Genomic_DNA"/>
</dbReference>
<dbReference type="RefSeq" id="WP_003026579.1">
    <property type="nucleotide sequence ID" value="NC_009257.1"/>
</dbReference>
<dbReference type="SMR" id="A4IYV5"/>
<dbReference type="KEGG" id="ftw:FTW_1346"/>
<dbReference type="HOGENOM" id="CLU_047123_0_0_6"/>
<dbReference type="GO" id="GO:0042597">
    <property type="term" value="C:periplasmic space"/>
    <property type="evidence" value="ECO:0007669"/>
    <property type="project" value="UniProtKB-SubCell"/>
</dbReference>
<dbReference type="GO" id="GO:0051301">
    <property type="term" value="P:cell division"/>
    <property type="evidence" value="ECO:0007669"/>
    <property type="project" value="UniProtKB-UniRule"/>
</dbReference>
<dbReference type="GO" id="GO:0017038">
    <property type="term" value="P:protein import"/>
    <property type="evidence" value="ECO:0007669"/>
    <property type="project" value="InterPro"/>
</dbReference>
<dbReference type="Gene3D" id="2.120.10.30">
    <property type="entry name" value="TolB, C-terminal domain"/>
    <property type="match status" value="1"/>
</dbReference>
<dbReference type="Gene3D" id="3.40.50.10070">
    <property type="entry name" value="TolB, N-terminal domain"/>
    <property type="match status" value="1"/>
</dbReference>
<dbReference type="HAMAP" id="MF_00671">
    <property type="entry name" value="TolB"/>
    <property type="match status" value="1"/>
</dbReference>
<dbReference type="InterPro" id="IPR011042">
    <property type="entry name" value="6-blade_b-propeller_TolB-like"/>
</dbReference>
<dbReference type="InterPro" id="IPR011659">
    <property type="entry name" value="PD40"/>
</dbReference>
<dbReference type="InterPro" id="IPR014167">
    <property type="entry name" value="Tol-Pal_TolB"/>
</dbReference>
<dbReference type="PANTHER" id="PTHR36842:SF1">
    <property type="entry name" value="PROTEIN TOLB"/>
    <property type="match status" value="1"/>
</dbReference>
<dbReference type="PANTHER" id="PTHR36842">
    <property type="entry name" value="PROTEIN TOLB HOMOLOG"/>
    <property type="match status" value="1"/>
</dbReference>
<dbReference type="Pfam" id="PF07676">
    <property type="entry name" value="PD40"/>
    <property type="match status" value="3"/>
</dbReference>
<dbReference type="SUPFAM" id="SSF52964">
    <property type="entry name" value="TolB, N-terminal domain"/>
    <property type="match status" value="1"/>
</dbReference>
<dbReference type="SUPFAM" id="SSF69304">
    <property type="entry name" value="Tricorn protease N-terminal domain"/>
    <property type="match status" value="1"/>
</dbReference>
<name>TOLB_FRATW</name>
<comment type="function">
    <text evidence="1">Part of the Tol-Pal system, which plays a role in outer membrane invagination during cell division and is important for maintaining outer membrane integrity.</text>
</comment>
<comment type="subunit">
    <text evidence="1">The Tol-Pal system is composed of five core proteins: the inner membrane proteins TolA, TolQ and TolR, the periplasmic protein TolB and the outer membrane protein Pal. They form a network linking the inner and outer membranes and the peptidoglycan layer.</text>
</comment>
<comment type="subcellular location">
    <subcellularLocation>
        <location evidence="1">Periplasm</location>
    </subcellularLocation>
</comment>
<comment type="similarity">
    <text evidence="1">Belongs to the TolB family.</text>
</comment>
<proteinExistence type="inferred from homology"/>
<gene>
    <name evidence="1" type="primary">tolB</name>
    <name type="ordered locus">FTW_1346</name>
</gene>
<evidence type="ECO:0000255" key="1">
    <source>
        <dbReference type="HAMAP-Rule" id="MF_00671"/>
    </source>
</evidence>